<sequence length="256" mass="28604">MSGFNFEVMVPEQGGKVVFSLTETGSCVSFYGDDEPGEGSCELASENMDFPSCPLGNGDDFCLSLALSTMRWSGMTKRNNFMDRFIGSFVHCTPVMIWSYGNLSKKSHHKMVCHTCPDEYKFSDKDEMQGYYEECLEASTDIFLDELATVVTGGFFPVGLKGSWGGWYLKYVRYAGPLAGSSGFIVNQRFYDRAQNKTGSRVVSMVEMDGDGLSFIYEKPSVYHSDGCTGSAARFWKRDHNERAGVELRAGLHFRM</sequence>
<organism>
    <name type="scientific">Infectious salmon anemia virus (isolate Atlantic salmon/Norway/810/9/99)</name>
    <name type="common">ISAV</name>
    <dbReference type="NCBI Taxonomy" id="652965"/>
    <lineage>
        <taxon>Viruses</taxon>
        <taxon>Riboviria</taxon>
        <taxon>Orthornavirae</taxon>
        <taxon>Negarnaviricota</taxon>
        <taxon>Polyploviricotina</taxon>
        <taxon>Insthoviricetes</taxon>
        <taxon>Articulavirales</taxon>
        <taxon>Orthomyxoviridae</taxon>
        <taxon>Isavirus</taxon>
        <taxon>Isavirus salaris</taxon>
    </lineage>
</organism>
<comment type="function">
    <text evidence="1 2">Plays a role in inhibition of the host innate immune system by counteracting the type I interferon signaling.</text>
</comment>
<comment type="subcellular location">
    <subcellularLocation>
        <location evidence="2">Host cytoplasm</location>
        <location evidence="2">Host perinuclear region</location>
    </subcellularLocation>
    <subcellularLocation>
        <location evidence="1 2">Host cytoplasm</location>
    </subcellularLocation>
</comment>
<comment type="alternative products">
    <event type="alternative splicing"/>
    <isoform>
        <id>Q8V3U2-1</id>
        <name>Non-structural protein 1</name>
        <sequence type="displayed"/>
    </isoform>
    <isoform>
        <id>Q8V3U1-1</id>
        <name evidence="3">Nuclear export protein</name>
        <sequence type="external"/>
    </isoform>
</comment>
<organismHost>
    <name type="scientific">Gadus morhua</name>
    <name type="common">Atlantic cod</name>
    <dbReference type="NCBI Taxonomy" id="8049"/>
</organismHost>
<organismHost>
    <name type="scientific">Oncorhynchus kisutch</name>
    <name type="common">Coho salmon</name>
    <name type="synonym">Salmo kisutch</name>
    <dbReference type="NCBI Taxonomy" id="8019"/>
</organismHost>
<organismHost>
    <name type="scientific">Oncorhynchus mykiss</name>
    <name type="common">Rainbow trout</name>
    <name type="synonym">Salmo gairdneri</name>
    <dbReference type="NCBI Taxonomy" id="8022"/>
</organismHost>
<organismHost>
    <name type="scientific">Pollachius virens</name>
    <name type="common">Saithe</name>
    <name type="synonym">Gadus virens</name>
    <dbReference type="NCBI Taxonomy" id="8060"/>
</organismHost>
<organismHost>
    <name type="scientific">Salmo salar</name>
    <name type="common">Atlantic salmon</name>
    <dbReference type="NCBI Taxonomy" id="8030"/>
</organismHost>
<organismHost>
    <name type="scientific">Salmo trutta</name>
    <name type="common">Brown trout</name>
    <dbReference type="NCBI Taxonomy" id="8032"/>
</organismHost>
<keyword id="KW-0025">Alternative splicing</keyword>
<keyword id="KW-1035">Host cytoplasm</keyword>
<keyword id="KW-0945">Host-virus interaction</keyword>
<keyword id="KW-1090">Inhibition of host innate immune response by virus</keyword>
<keyword id="KW-1114">Inhibition of host interferon signaling pathway by virus</keyword>
<keyword id="KW-0922">Interferon antiviral system evasion</keyword>
<keyword id="KW-1185">Reference proteome</keyword>
<keyword id="KW-0899">Viral immunoevasion</keyword>
<accession>Q8V3U2</accession>
<reference key="1">
    <citation type="journal article" date="2002" name="J. Gen. Virol.">
        <title>Genomic organization of infectious salmon anaemia virus.</title>
        <authorList>
            <person name="Clouthier S.C."/>
            <person name="Rector T."/>
            <person name="Brown N.E."/>
            <person name="Anderson E.D."/>
        </authorList>
    </citation>
    <scope>NUCLEOTIDE SEQUENCE [GENOMIC RNA]</scope>
    <scope>FUNCTION</scope>
</reference>
<reference key="2">
    <citation type="journal article" date="2006" name="Virus Res.">
        <title>Identification of an interferon antagonist protein encoded by segment 7 of infectious salmon anaemia virus.</title>
        <authorList>
            <person name="McBeath A.J."/>
            <person name="Collet B."/>
            <person name="Paley R."/>
            <person name="Duraffour S."/>
            <person name="Aspehaug V."/>
            <person name="Biering E."/>
            <person name="Secombes C.J."/>
            <person name="Snow M."/>
        </authorList>
    </citation>
    <scope>FUNCTION</scope>
    <scope>SUBCELLULAR LOCATION</scope>
</reference>
<reference key="3">
    <citation type="journal article" date="2008" name="Virus Res.">
        <title>Molecular and functional characterization of two infectious salmon anaemia virus (ISAV) proteins with type I interferon antagonizing activity.</title>
        <authorList>
            <person name="Garcia-Rosado E."/>
            <person name="Markussen T."/>
            <person name="Kileng O."/>
            <person name="Baekkevold E.S."/>
            <person name="Robertsen B."/>
            <person name="Mjaaland S."/>
            <person name="Rimstad E."/>
        </authorList>
    </citation>
    <scope>FUNCTION</scope>
    <scope>SUBCELLULAR LOCATION</scope>
</reference>
<reference key="4">
    <citation type="journal article" date="2011" name="Virus Res.">
        <title>Infectious salmon anemia virus--genetics and pathogenesis.</title>
        <authorList>
            <person name="Cottet L."/>
            <person name="Rivas-Aravena A."/>
            <person name="Cortez-San Martin M."/>
            <person name="Sandino A.M."/>
            <person name="Spencer E."/>
        </authorList>
    </citation>
    <scope>REVIEW</scope>
</reference>
<reference key="5">
    <citation type="journal article" date="2013" name="Virus Res.">
        <title>Infectious salmon anaemia virus nuclear export protein is encoded by a spliced gene product of genomic segment 7.</title>
        <authorList>
            <person name="Ramly R.B."/>
            <person name="Olsen C.M."/>
            <person name="Braaen S."/>
            <person name="Rimstad E."/>
        </authorList>
    </citation>
    <scope>ALTERNATIVE SPLICING</scope>
</reference>
<feature type="chain" id="PRO_0000403922" description="Non-structural protein 1">
    <location>
        <begin position="1"/>
        <end position="256"/>
    </location>
</feature>
<proteinExistence type="predicted"/>
<protein>
    <recommendedName>
        <fullName>Non-structural protein 1</fullName>
        <shortName>NS1</shortName>
    </recommendedName>
    <alternativeName>
        <fullName>Protein P4</fullName>
        <shortName>P4</shortName>
    </alternativeName>
</protein>
<name>NS1_ISAV8</name>
<evidence type="ECO:0000269" key="1">
    <source>
    </source>
</evidence>
<evidence type="ECO:0000269" key="2">
    <source>
    </source>
</evidence>
<evidence type="ECO:0000269" key="3">
    <source>
    </source>
</evidence>
<evidence type="ECO:0000303" key="4">
    <source>
    </source>
</evidence>
<gene>
    <name evidence="4" type="primary">Segment-7</name>
    <name type="ORF">s7ORF1</name>
</gene>
<dbReference type="EMBL" id="AF404341">
    <property type="protein sequence ID" value="AAL67956.1"/>
    <property type="molecule type" value="Genomic_RNA"/>
</dbReference>
<dbReference type="EMBL" id="AF429989">
    <property type="protein sequence ID" value="AAN57723.1"/>
    <property type="molecule type" value="Genomic_RNA"/>
</dbReference>
<dbReference type="RefSeq" id="YP_145798.1">
    <property type="nucleotide sequence ID" value="NC_006498.1"/>
</dbReference>
<dbReference type="KEGG" id="vg:71004591"/>
<dbReference type="Proteomes" id="UP000008772">
    <property type="component" value="Genome"/>
</dbReference>
<dbReference type="GO" id="GO:0044220">
    <property type="term" value="C:host cell perinuclear region of cytoplasm"/>
    <property type="evidence" value="ECO:0007669"/>
    <property type="project" value="UniProtKB-SubCell"/>
</dbReference>
<dbReference type="GO" id="GO:0052170">
    <property type="term" value="P:symbiont-mediated suppression of host innate immune response"/>
    <property type="evidence" value="ECO:0007669"/>
    <property type="project" value="UniProtKB-KW"/>
</dbReference>
<dbReference type="GO" id="GO:0039502">
    <property type="term" value="P:symbiont-mediated suppression of host type I interferon-mediated signaling pathway"/>
    <property type="evidence" value="ECO:0007669"/>
    <property type="project" value="UniProtKB-KW"/>
</dbReference>